<protein>
    <recommendedName>
        <fullName>Uncharacterized protein C11D3.14c</fullName>
    </recommendedName>
</protein>
<name>YAOE_SCHPO</name>
<dbReference type="EMBL" id="CU329670">
    <property type="protein sequence ID" value="CAA92315.1"/>
    <property type="molecule type" value="Genomic_DNA"/>
</dbReference>
<dbReference type="PIR" id="T37523">
    <property type="entry name" value="T37523"/>
</dbReference>
<dbReference type="RefSeq" id="NP_592809.1">
    <property type="nucleotide sequence ID" value="NM_001018209.2"/>
</dbReference>
<dbReference type="SMR" id="Q10093"/>
<dbReference type="BioGRID" id="279424">
    <property type="interactions" value="7"/>
</dbReference>
<dbReference type="FunCoup" id="Q10093">
    <property type="interactions" value="22"/>
</dbReference>
<dbReference type="STRING" id="284812.Q10093"/>
<dbReference type="iPTMnet" id="Q10093"/>
<dbReference type="PaxDb" id="4896-SPAC11D3.14c.1"/>
<dbReference type="EnsemblFungi" id="SPAC11D3.14c.1">
    <property type="protein sequence ID" value="SPAC11D3.14c.1:pep"/>
    <property type="gene ID" value="SPAC11D3.14c"/>
</dbReference>
<dbReference type="KEGG" id="spo:2542986"/>
<dbReference type="PomBase" id="SPAC11D3.14c"/>
<dbReference type="VEuPathDB" id="FungiDB:SPAC11D3.14c"/>
<dbReference type="eggNOG" id="KOG1939">
    <property type="taxonomic scope" value="Eukaryota"/>
</dbReference>
<dbReference type="HOGENOM" id="CLU_002157_0_0_1"/>
<dbReference type="InParanoid" id="Q10093"/>
<dbReference type="OMA" id="VANSAMC"/>
<dbReference type="PhylomeDB" id="Q10093"/>
<dbReference type="PRO" id="PR:Q10093"/>
<dbReference type="Proteomes" id="UP000002485">
    <property type="component" value="Chromosome I"/>
</dbReference>
<dbReference type="GO" id="GO:0005829">
    <property type="term" value="C:cytosol"/>
    <property type="evidence" value="ECO:0007005"/>
    <property type="project" value="PomBase"/>
</dbReference>
<dbReference type="GO" id="GO:0017168">
    <property type="term" value="F:5-oxoprolinase (ATP-hydrolyzing) activity"/>
    <property type="evidence" value="ECO:0000318"/>
    <property type="project" value="GO_Central"/>
</dbReference>
<dbReference type="GO" id="GO:1990748">
    <property type="term" value="P:cellular detoxification"/>
    <property type="evidence" value="ECO:0000303"/>
    <property type="project" value="PomBase"/>
</dbReference>
<dbReference type="GO" id="GO:0006749">
    <property type="term" value="P:glutathione metabolic process"/>
    <property type="evidence" value="ECO:0000318"/>
    <property type="project" value="GO_Central"/>
</dbReference>
<dbReference type="InterPro" id="IPR008040">
    <property type="entry name" value="Hydant_A_N"/>
</dbReference>
<dbReference type="InterPro" id="IPR002821">
    <property type="entry name" value="Hydantoinase_A"/>
</dbReference>
<dbReference type="InterPro" id="IPR003692">
    <property type="entry name" value="Hydantoinase_B"/>
</dbReference>
<dbReference type="InterPro" id="IPR045079">
    <property type="entry name" value="Oxoprolinase-like"/>
</dbReference>
<dbReference type="PANTHER" id="PTHR11365:SF2">
    <property type="entry name" value="5-OXOPROLINASE"/>
    <property type="match status" value="1"/>
</dbReference>
<dbReference type="PANTHER" id="PTHR11365">
    <property type="entry name" value="5-OXOPROLINASE RELATED"/>
    <property type="match status" value="1"/>
</dbReference>
<dbReference type="Pfam" id="PF05378">
    <property type="entry name" value="Hydant_A_N"/>
    <property type="match status" value="1"/>
</dbReference>
<dbReference type="Pfam" id="PF01968">
    <property type="entry name" value="Hydantoinase_A"/>
    <property type="match status" value="1"/>
</dbReference>
<dbReference type="Pfam" id="PF02538">
    <property type="entry name" value="Hydantoinase_B"/>
    <property type="match status" value="1"/>
</dbReference>
<proteinExistence type="inferred from homology"/>
<feature type="chain" id="PRO_0000208583" description="Uncharacterized protein C11D3.14c">
    <location>
        <begin position="1"/>
        <end position="1260"/>
    </location>
</feature>
<comment type="similarity">
    <text evidence="1">Belongs to the oxoprolinase family.</text>
</comment>
<evidence type="ECO:0000305" key="1"/>
<gene>
    <name type="ORF">SPAC11D3.14c</name>
</gene>
<accession>Q10093</accession>
<accession>O59664</accession>
<organism>
    <name type="scientific">Schizosaccharomyces pombe (strain 972 / ATCC 24843)</name>
    <name type="common">Fission yeast</name>
    <dbReference type="NCBI Taxonomy" id="284812"/>
    <lineage>
        <taxon>Eukaryota</taxon>
        <taxon>Fungi</taxon>
        <taxon>Dikarya</taxon>
        <taxon>Ascomycota</taxon>
        <taxon>Taphrinomycotina</taxon>
        <taxon>Schizosaccharomycetes</taxon>
        <taxon>Schizosaccharomycetales</taxon>
        <taxon>Schizosaccharomycetaceae</taxon>
        <taxon>Schizosaccharomyces</taxon>
    </lineage>
</organism>
<sequence length="1260" mass="138784">MKQDVRIAIDRGGTFTDVYYKISGWREQEGIFKLLSVNPKLYDDAPTEGIRRVLCYASGEEIPRKVPLDLTRVSSIRMGTTVATNALLERKGEKTAFIITEGFRNLVEIGNQARPDLFDLTVSRPSPLYQRVIEAKERVVLENQFSKTAGIVQGITGEFLRVEKKLDEEALYQDLKELYNEGFRSISVSLMHSYTYPLHEEVVEKIAKRIGFTDISLSSKLTPMVKIVPRAVSAIIDAYLSSTLRYYLDSFKKNFYNVKPNTIQFMKSDGGLVDIDNFTAISAIMSGPAAGTVGFAKTSSLHADDKTPAIGFDMGGTSTDVSRYDGKFEHIYEANIFGLYIQSPQLDIQTVAAGGGSRLFWRNQLFSVGPESAGAFPGPACYLNGGPLTVTDANVLLGRIIPDFFPKIFGPKENESMNKDIVIEKFSELRDIINIDIEKEKTIEEIAMGFIQVANETMCRPIRKLTESRGLDLSAHHLAVFGGAGGQHACAIASLLNIEKIIIHKYSSVLSAYGLALAHVTHEEQMPCLSVLDEDNLPLIQSKFDVLDKKAVSFLENEGYLESQISTELFANLRYEGNDTTMMIAKPKDSWDFKTLFEESYKNQFGFSLIDRKIMVEDIRIRAIARASNQSEVDTVFASETENENTVFIRDNKPTMYTPVYFAEVGKVNCHVYQLSSLPVHSLITGPAVIVDTTQTLLIEPSFTAKIFARHVLLEKTKSTLVVKKNVDLDPITMTIFANRFMSISEQMGQVLQKTAVSVNVKERLDYSCALFSPDGGLVANAPHVPAMLGSMQTAVKWQHNYWKGKLVPGDVLLSNHPIAGGVHLPDLTVVTPVFDNNKDIIFYCAARGHMVDVGGITPGSMPSNSKAIYEEGAAIKTFKVVKAGTFDEKGLTQLLFDEPAKYPDCSGSRTLRDNISDVKAMLSACHRGRSMVEKLVVEYGLDIVQRSMYGIQAAAEKAVRDVLKAFSVQNSQKPLKAIDYMDDGTPLQLEVKIDPETGDAVFDFEGTGPEVYGNWNAPIAITYSSVIYCLRSIINQDIPLNEGCLKPIEIRIPPSCFLNPSETAAVVGGNVLTSQRITDVILKAFSICAASQGCMNNLTFGYDGENGEEGFAMYETIAGGAGAGPTWNGTSGVHTHMTNTRITDPEVVERRAPVILRRFCLRENSGGKGEYHGGDGVIRHFEFRRSMHCSILSERRSRAPYGMNGGEDGAMGVNTWIDCSNPDFPRYVNLGGKNHVLMGKGDHIVIETPGGGGYGAVSI</sequence>
<reference key="1">
    <citation type="journal article" date="2002" name="Nature">
        <title>The genome sequence of Schizosaccharomyces pombe.</title>
        <authorList>
            <person name="Wood V."/>
            <person name="Gwilliam R."/>
            <person name="Rajandream M.A."/>
            <person name="Lyne M.H."/>
            <person name="Lyne R."/>
            <person name="Stewart A."/>
            <person name="Sgouros J.G."/>
            <person name="Peat N."/>
            <person name="Hayles J."/>
            <person name="Baker S.G."/>
            <person name="Basham D."/>
            <person name="Bowman S."/>
            <person name="Brooks K."/>
            <person name="Brown D."/>
            <person name="Brown S."/>
            <person name="Chillingworth T."/>
            <person name="Churcher C.M."/>
            <person name="Collins M."/>
            <person name="Connor R."/>
            <person name="Cronin A."/>
            <person name="Davis P."/>
            <person name="Feltwell T."/>
            <person name="Fraser A."/>
            <person name="Gentles S."/>
            <person name="Goble A."/>
            <person name="Hamlin N."/>
            <person name="Harris D.E."/>
            <person name="Hidalgo J."/>
            <person name="Hodgson G."/>
            <person name="Holroyd S."/>
            <person name="Hornsby T."/>
            <person name="Howarth S."/>
            <person name="Huckle E.J."/>
            <person name="Hunt S."/>
            <person name="Jagels K."/>
            <person name="James K.D."/>
            <person name="Jones L."/>
            <person name="Jones M."/>
            <person name="Leather S."/>
            <person name="McDonald S."/>
            <person name="McLean J."/>
            <person name="Mooney P."/>
            <person name="Moule S."/>
            <person name="Mungall K.L."/>
            <person name="Murphy L.D."/>
            <person name="Niblett D."/>
            <person name="Odell C."/>
            <person name="Oliver K."/>
            <person name="O'Neil S."/>
            <person name="Pearson D."/>
            <person name="Quail M.A."/>
            <person name="Rabbinowitsch E."/>
            <person name="Rutherford K.M."/>
            <person name="Rutter S."/>
            <person name="Saunders D."/>
            <person name="Seeger K."/>
            <person name="Sharp S."/>
            <person name="Skelton J."/>
            <person name="Simmonds M.N."/>
            <person name="Squares R."/>
            <person name="Squares S."/>
            <person name="Stevens K."/>
            <person name="Taylor K."/>
            <person name="Taylor R.G."/>
            <person name="Tivey A."/>
            <person name="Walsh S.V."/>
            <person name="Warren T."/>
            <person name="Whitehead S."/>
            <person name="Woodward J.R."/>
            <person name="Volckaert G."/>
            <person name="Aert R."/>
            <person name="Robben J."/>
            <person name="Grymonprez B."/>
            <person name="Weltjens I."/>
            <person name="Vanstreels E."/>
            <person name="Rieger M."/>
            <person name="Schaefer M."/>
            <person name="Mueller-Auer S."/>
            <person name="Gabel C."/>
            <person name="Fuchs M."/>
            <person name="Duesterhoeft A."/>
            <person name="Fritzc C."/>
            <person name="Holzer E."/>
            <person name="Moestl D."/>
            <person name="Hilbert H."/>
            <person name="Borzym K."/>
            <person name="Langer I."/>
            <person name="Beck A."/>
            <person name="Lehrach H."/>
            <person name="Reinhardt R."/>
            <person name="Pohl T.M."/>
            <person name="Eger P."/>
            <person name="Zimmermann W."/>
            <person name="Wedler H."/>
            <person name="Wambutt R."/>
            <person name="Purnelle B."/>
            <person name="Goffeau A."/>
            <person name="Cadieu E."/>
            <person name="Dreano S."/>
            <person name="Gloux S."/>
            <person name="Lelaure V."/>
            <person name="Mottier S."/>
            <person name="Galibert F."/>
            <person name="Aves S.J."/>
            <person name="Xiang Z."/>
            <person name="Hunt C."/>
            <person name="Moore K."/>
            <person name="Hurst S.M."/>
            <person name="Lucas M."/>
            <person name="Rochet M."/>
            <person name="Gaillardin C."/>
            <person name="Tallada V.A."/>
            <person name="Garzon A."/>
            <person name="Thode G."/>
            <person name="Daga R.R."/>
            <person name="Cruzado L."/>
            <person name="Jimenez J."/>
            <person name="Sanchez M."/>
            <person name="del Rey F."/>
            <person name="Benito J."/>
            <person name="Dominguez A."/>
            <person name="Revuelta J.L."/>
            <person name="Moreno S."/>
            <person name="Armstrong J."/>
            <person name="Forsburg S.L."/>
            <person name="Cerutti L."/>
            <person name="Lowe T."/>
            <person name="McCombie W.R."/>
            <person name="Paulsen I."/>
            <person name="Potashkin J."/>
            <person name="Shpakovski G.V."/>
            <person name="Ussery D."/>
            <person name="Barrell B.G."/>
            <person name="Nurse P."/>
        </authorList>
    </citation>
    <scope>NUCLEOTIDE SEQUENCE [LARGE SCALE GENOMIC DNA]</scope>
    <source>
        <strain>972 / ATCC 24843</strain>
    </source>
</reference>
<keyword id="KW-1185">Reference proteome</keyword>